<proteinExistence type="evidence at protein level"/>
<name>CRIPT_MOUSE</name>
<reference key="1">
    <citation type="submission" date="1999-05" db="EMBL/GenBank/DDBJ databases">
        <title>Cloning and sequencing of mouse testicular CRIPT.</title>
        <authorList>
            <person name="Sebire K.L."/>
            <person name="de Kretser D.M."/>
            <person name="O'Bryan M.K."/>
        </authorList>
    </citation>
    <scope>NUCLEOTIDE SEQUENCE [MRNA]</scope>
    <source>
        <strain>BALB/cJ</strain>
        <tissue>Testis</tissue>
    </source>
</reference>
<reference key="2">
    <citation type="journal article" date="2005" name="Science">
        <title>The transcriptional landscape of the mammalian genome.</title>
        <authorList>
            <person name="Carninci P."/>
            <person name="Kasukawa T."/>
            <person name="Katayama S."/>
            <person name="Gough J."/>
            <person name="Frith M.C."/>
            <person name="Maeda N."/>
            <person name="Oyama R."/>
            <person name="Ravasi T."/>
            <person name="Lenhard B."/>
            <person name="Wells C."/>
            <person name="Kodzius R."/>
            <person name="Shimokawa K."/>
            <person name="Bajic V.B."/>
            <person name="Brenner S.E."/>
            <person name="Batalov S."/>
            <person name="Forrest A.R."/>
            <person name="Zavolan M."/>
            <person name="Davis M.J."/>
            <person name="Wilming L.G."/>
            <person name="Aidinis V."/>
            <person name="Allen J.E."/>
            <person name="Ambesi-Impiombato A."/>
            <person name="Apweiler R."/>
            <person name="Aturaliya R.N."/>
            <person name="Bailey T.L."/>
            <person name="Bansal M."/>
            <person name="Baxter L."/>
            <person name="Beisel K.W."/>
            <person name="Bersano T."/>
            <person name="Bono H."/>
            <person name="Chalk A.M."/>
            <person name="Chiu K.P."/>
            <person name="Choudhary V."/>
            <person name="Christoffels A."/>
            <person name="Clutterbuck D.R."/>
            <person name="Crowe M.L."/>
            <person name="Dalla E."/>
            <person name="Dalrymple B.P."/>
            <person name="de Bono B."/>
            <person name="Della Gatta G."/>
            <person name="di Bernardo D."/>
            <person name="Down T."/>
            <person name="Engstrom P."/>
            <person name="Fagiolini M."/>
            <person name="Faulkner G."/>
            <person name="Fletcher C.F."/>
            <person name="Fukushima T."/>
            <person name="Furuno M."/>
            <person name="Futaki S."/>
            <person name="Gariboldi M."/>
            <person name="Georgii-Hemming P."/>
            <person name="Gingeras T.R."/>
            <person name="Gojobori T."/>
            <person name="Green R.E."/>
            <person name="Gustincich S."/>
            <person name="Harbers M."/>
            <person name="Hayashi Y."/>
            <person name="Hensch T.K."/>
            <person name="Hirokawa N."/>
            <person name="Hill D."/>
            <person name="Huminiecki L."/>
            <person name="Iacono M."/>
            <person name="Ikeo K."/>
            <person name="Iwama A."/>
            <person name="Ishikawa T."/>
            <person name="Jakt M."/>
            <person name="Kanapin A."/>
            <person name="Katoh M."/>
            <person name="Kawasawa Y."/>
            <person name="Kelso J."/>
            <person name="Kitamura H."/>
            <person name="Kitano H."/>
            <person name="Kollias G."/>
            <person name="Krishnan S.P."/>
            <person name="Kruger A."/>
            <person name="Kummerfeld S.K."/>
            <person name="Kurochkin I.V."/>
            <person name="Lareau L.F."/>
            <person name="Lazarevic D."/>
            <person name="Lipovich L."/>
            <person name="Liu J."/>
            <person name="Liuni S."/>
            <person name="McWilliam S."/>
            <person name="Madan Babu M."/>
            <person name="Madera M."/>
            <person name="Marchionni L."/>
            <person name="Matsuda H."/>
            <person name="Matsuzawa S."/>
            <person name="Miki H."/>
            <person name="Mignone F."/>
            <person name="Miyake S."/>
            <person name="Morris K."/>
            <person name="Mottagui-Tabar S."/>
            <person name="Mulder N."/>
            <person name="Nakano N."/>
            <person name="Nakauchi H."/>
            <person name="Ng P."/>
            <person name="Nilsson R."/>
            <person name="Nishiguchi S."/>
            <person name="Nishikawa S."/>
            <person name="Nori F."/>
            <person name="Ohara O."/>
            <person name="Okazaki Y."/>
            <person name="Orlando V."/>
            <person name="Pang K.C."/>
            <person name="Pavan W.J."/>
            <person name="Pavesi G."/>
            <person name="Pesole G."/>
            <person name="Petrovsky N."/>
            <person name="Piazza S."/>
            <person name="Reed J."/>
            <person name="Reid J.F."/>
            <person name="Ring B.Z."/>
            <person name="Ringwald M."/>
            <person name="Rost B."/>
            <person name="Ruan Y."/>
            <person name="Salzberg S.L."/>
            <person name="Sandelin A."/>
            <person name="Schneider C."/>
            <person name="Schoenbach C."/>
            <person name="Sekiguchi K."/>
            <person name="Semple C.A."/>
            <person name="Seno S."/>
            <person name="Sessa L."/>
            <person name="Sheng Y."/>
            <person name="Shibata Y."/>
            <person name="Shimada H."/>
            <person name="Shimada K."/>
            <person name="Silva D."/>
            <person name="Sinclair B."/>
            <person name="Sperling S."/>
            <person name="Stupka E."/>
            <person name="Sugiura K."/>
            <person name="Sultana R."/>
            <person name="Takenaka Y."/>
            <person name="Taki K."/>
            <person name="Tammoja K."/>
            <person name="Tan S.L."/>
            <person name="Tang S."/>
            <person name="Taylor M.S."/>
            <person name="Tegner J."/>
            <person name="Teichmann S.A."/>
            <person name="Ueda H.R."/>
            <person name="van Nimwegen E."/>
            <person name="Verardo R."/>
            <person name="Wei C.L."/>
            <person name="Yagi K."/>
            <person name="Yamanishi H."/>
            <person name="Zabarovsky E."/>
            <person name="Zhu S."/>
            <person name="Zimmer A."/>
            <person name="Hide W."/>
            <person name="Bult C."/>
            <person name="Grimmond S.M."/>
            <person name="Teasdale R.D."/>
            <person name="Liu E.T."/>
            <person name="Brusic V."/>
            <person name="Quackenbush J."/>
            <person name="Wahlestedt C."/>
            <person name="Mattick J.S."/>
            <person name="Hume D.A."/>
            <person name="Kai C."/>
            <person name="Sasaki D."/>
            <person name="Tomaru Y."/>
            <person name="Fukuda S."/>
            <person name="Kanamori-Katayama M."/>
            <person name="Suzuki M."/>
            <person name="Aoki J."/>
            <person name="Arakawa T."/>
            <person name="Iida J."/>
            <person name="Imamura K."/>
            <person name="Itoh M."/>
            <person name="Kato T."/>
            <person name="Kawaji H."/>
            <person name="Kawagashira N."/>
            <person name="Kawashima T."/>
            <person name="Kojima M."/>
            <person name="Kondo S."/>
            <person name="Konno H."/>
            <person name="Nakano K."/>
            <person name="Ninomiya N."/>
            <person name="Nishio T."/>
            <person name="Okada M."/>
            <person name="Plessy C."/>
            <person name="Shibata K."/>
            <person name="Shiraki T."/>
            <person name="Suzuki S."/>
            <person name="Tagami M."/>
            <person name="Waki K."/>
            <person name="Watahiki A."/>
            <person name="Okamura-Oho Y."/>
            <person name="Suzuki H."/>
            <person name="Kawai J."/>
            <person name="Hayashizaki Y."/>
        </authorList>
    </citation>
    <scope>NUCLEOTIDE SEQUENCE [LARGE SCALE MRNA]</scope>
    <source>
        <strain>C57BL/6J</strain>
        <tissue>Head</tissue>
        <tissue>Lung</tissue>
        <tissue>Small intestine</tissue>
    </source>
</reference>
<reference key="3">
    <citation type="journal article" date="2004" name="Genome Res.">
        <title>The status, quality, and expansion of the NIH full-length cDNA project: the Mammalian Gene Collection (MGC).</title>
        <authorList>
            <consortium name="The MGC Project Team"/>
        </authorList>
    </citation>
    <scope>NUCLEOTIDE SEQUENCE [LARGE SCALE MRNA]</scope>
    <source>
        <strain>Czech II</strain>
        <strain>FVB/N-3</strain>
        <tissue>Mammary tumor</tissue>
    </source>
</reference>
<reference key="4">
    <citation type="journal article" date="2007" name="Biochemistry">
        <title>A thermodynamic ligand binding study of the third PDZ domain (PDZ3) from the mammalian neuronal protein PSD-95.</title>
        <authorList>
            <person name="Saro D."/>
            <person name="Li T."/>
            <person name="Rupasinghe C."/>
            <person name="Paredes A."/>
            <person name="Caspers N."/>
            <person name="Spaller M.R."/>
        </authorList>
    </citation>
    <scope>INTERACTION WITH DLG4</scope>
</reference>
<keyword id="KW-0966">Cell projection</keyword>
<keyword id="KW-0963">Cytoplasm</keyword>
<keyword id="KW-0507">mRNA processing</keyword>
<keyword id="KW-0508">mRNA splicing</keyword>
<keyword id="KW-1185">Reference proteome</keyword>
<keyword id="KW-0747">Spliceosome</keyword>
<keyword id="KW-0770">Synapse</keyword>
<comment type="function">
    <text evidence="2 3">As a component of the minor spliceosome, involved in the splicing of U12-type introns in pre-mRNAs (By similarity). Involved in the cytoskeletal anchoring of DLG4 in excitatory synapses (By similarity).</text>
</comment>
<comment type="subunit">
    <text evidence="1 3 5">Component of the minor spliceosome. Within this complex, interacts with RNF113A, as well as with SF3B1/SF3b155, SF3B2/SF3b145 and PHF5A/SF3b14b (By similarity). Interacts with TUBB1. Interacts strongly with the PDZ3 domain of members of the DLG4 family. Associates with microtubules (By similarity). Interacts with DLG4.</text>
</comment>
<comment type="subcellular location">
    <subcellularLocation>
        <location evidence="1">Cytoplasm</location>
    </subcellularLocation>
    <subcellularLocation>
        <location evidence="1">Synapse</location>
    </subcellularLocation>
    <subcellularLocation>
        <location evidence="1">Cell projection</location>
        <location evidence="1">Dendritic spine</location>
    </subcellularLocation>
    <text evidence="1">Colocalizes with DLG4 in asymmetric synapses.</text>
</comment>
<comment type="similarity">
    <text evidence="6">Belongs to the CRIPT family.</text>
</comment>
<accession>O70333</accession>
<accession>Q99LR6</accession>
<accession>Q9DBP4</accession>
<evidence type="ECO:0000250" key="1"/>
<evidence type="ECO:0000250" key="2">
    <source>
        <dbReference type="UniProtKB" id="Q792Q4"/>
    </source>
</evidence>
<evidence type="ECO:0000250" key="3">
    <source>
        <dbReference type="UniProtKB" id="Q9P021"/>
    </source>
</evidence>
<evidence type="ECO:0000256" key="4">
    <source>
        <dbReference type="SAM" id="MobiDB-lite"/>
    </source>
</evidence>
<evidence type="ECO:0000269" key="5">
    <source>
    </source>
</evidence>
<evidence type="ECO:0000305" key="6"/>
<feature type="chain" id="PRO_0000314564" description="Cysteine-rich PDZ-binding protein">
    <location>
        <begin position="1"/>
        <end position="101"/>
    </location>
</feature>
<feature type="region of interest" description="Disordered" evidence="4">
    <location>
        <begin position="19"/>
        <end position="38"/>
    </location>
</feature>
<feature type="region of interest" description="Sufficient for interaction with DLG4" evidence="5">
    <location>
        <begin position="95"/>
        <end position="101"/>
    </location>
</feature>
<feature type="region of interest" description="PDZ3-binding">
    <location>
        <begin position="98"/>
        <end position="101"/>
    </location>
</feature>
<feature type="sequence conflict" description="In Ref. 2; BAB23596." evidence="6" ref="2">
    <original>C</original>
    <variation>Y</variation>
    <location>
        <position position="86"/>
    </location>
</feature>
<organism>
    <name type="scientific">Mus musculus</name>
    <name type="common">Mouse</name>
    <dbReference type="NCBI Taxonomy" id="10090"/>
    <lineage>
        <taxon>Eukaryota</taxon>
        <taxon>Metazoa</taxon>
        <taxon>Chordata</taxon>
        <taxon>Craniata</taxon>
        <taxon>Vertebrata</taxon>
        <taxon>Euteleostomi</taxon>
        <taxon>Mammalia</taxon>
        <taxon>Eutheria</taxon>
        <taxon>Euarchontoglires</taxon>
        <taxon>Glires</taxon>
        <taxon>Rodentia</taxon>
        <taxon>Myomorpha</taxon>
        <taxon>Muroidea</taxon>
        <taxon>Muridae</taxon>
        <taxon>Murinae</taxon>
        <taxon>Mus</taxon>
        <taxon>Mus</taxon>
    </lineage>
</organism>
<sequence length="101" mass="11271">MVCEKCEKKLGRVITPDTWKDGARNTTESGGRKLNENKALTSKKARFDPYGKNKFSTCRICKSSVHQPGSHYCQGCAYKKGICAMCGKKVLDTKNYKQTSV</sequence>
<gene>
    <name type="primary">Cript</name>
</gene>
<protein>
    <recommendedName>
        <fullName>Cysteine-rich PDZ-binding protein</fullName>
    </recommendedName>
    <alternativeName>
        <fullName>Cysteine-rich interactor of PDZ three</fullName>
        <shortName>Cysteine-rich interactor of PDZ3</shortName>
    </alternativeName>
</protein>
<dbReference type="EMBL" id="AF151637">
    <property type="protein sequence ID" value="AAD38045.1"/>
    <property type="molecule type" value="mRNA"/>
</dbReference>
<dbReference type="EMBL" id="AK004828">
    <property type="protein sequence ID" value="BAB23596.1"/>
    <property type="molecule type" value="mRNA"/>
</dbReference>
<dbReference type="EMBL" id="AK008523">
    <property type="protein sequence ID" value="BAB25719.1"/>
    <property type="molecule type" value="mRNA"/>
</dbReference>
<dbReference type="EMBL" id="AK029409">
    <property type="protein sequence ID" value="BAC26438.1"/>
    <property type="molecule type" value="mRNA"/>
</dbReference>
<dbReference type="EMBL" id="BC002258">
    <property type="protein sequence ID" value="AAH02258.1"/>
    <property type="molecule type" value="mRNA"/>
</dbReference>
<dbReference type="EMBL" id="BC023013">
    <property type="protein sequence ID" value="AAH23013.1"/>
    <property type="molecule type" value="mRNA"/>
</dbReference>
<dbReference type="CCDS" id="CCDS29012.1"/>
<dbReference type="RefSeq" id="NP_064320.1">
    <property type="nucleotide sequence ID" value="NM_019936.3"/>
</dbReference>
<dbReference type="SMR" id="O70333"/>
<dbReference type="BioGRID" id="208145">
    <property type="interactions" value="1"/>
</dbReference>
<dbReference type="FunCoup" id="O70333">
    <property type="interactions" value="314"/>
</dbReference>
<dbReference type="IntAct" id="O70333">
    <property type="interactions" value="1"/>
</dbReference>
<dbReference type="STRING" id="10090.ENSMUSP00000024959"/>
<dbReference type="GlyGen" id="O70333">
    <property type="glycosylation" value="1 site, 1 O-linked glycan (1 site)"/>
</dbReference>
<dbReference type="iPTMnet" id="O70333"/>
<dbReference type="PhosphoSitePlus" id="O70333"/>
<dbReference type="SwissPalm" id="O70333"/>
<dbReference type="PaxDb" id="10090-ENSMUSP00000024959"/>
<dbReference type="ProteomicsDB" id="284170"/>
<dbReference type="Pumba" id="O70333"/>
<dbReference type="Antibodypedia" id="29983">
    <property type="antibodies" value="96 antibodies from 21 providers"/>
</dbReference>
<dbReference type="DNASU" id="56724"/>
<dbReference type="Ensembl" id="ENSMUST00000024959.10">
    <property type="protein sequence ID" value="ENSMUSP00000024959.4"/>
    <property type="gene ID" value="ENSMUSG00000024146.10"/>
</dbReference>
<dbReference type="GeneID" id="56724"/>
<dbReference type="KEGG" id="mmu:56724"/>
<dbReference type="UCSC" id="uc008duo.2">
    <property type="organism name" value="mouse"/>
</dbReference>
<dbReference type="AGR" id="MGI:1929655"/>
<dbReference type="CTD" id="9419"/>
<dbReference type="MGI" id="MGI:1929655">
    <property type="gene designation" value="Cript"/>
</dbReference>
<dbReference type="VEuPathDB" id="HostDB:ENSMUSG00000024146"/>
<dbReference type="eggNOG" id="KOG3476">
    <property type="taxonomic scope" value="Eukaryota"/>
</dbReference>
<dbReference type="GeneTree" id="ENSGT00950000183100"/>
<dbReference type="HOGENOM" id="CLU_133934_0_0_1"/>
<dbReference type="InParanoid" id="O70333"/>
<dbReference type="OMA" id="MPCDKCE"/>
<dbReference type="OrthoDB" id="147332at2759"/>
<dbReference type="PhylomeDB" id="O70333"/>
<dbReference type="TreeFam" id="TF300144"/>
<dbReference type="BioGRID-ORCS" id="56724">
    <property type="hits" value="17 hits in 76 CRISPR screens"/>
</dbReference>
<dbReference type="ChiTaRS" id="Cript">
    <property type="organism name" value="mouse"/>
</dbReference>
<dbReference type="PRO" id="PR:O70333"/>
<dbReference type="Proteomes" id="UP000000589">
    <property type="component" value="Chromosome 17"/>
</dbReference>
<dbReference type="RNAct" id="O70333">
    <property type="molecule type" value="protein"/>
</dbReference>
<dbReference type="Bgee" id="ENSMUSG00000024146">
    <property type="expression patterns" value="Expressed in animal zygote and 263 other cell types or tissues"/>
</dbReference>
<dbReference type="GO" id="GO:0005737">
    <property type="term" value="C:cytoplasm"/>
    <property type="evidence" value="ECO:0007669"/>
    <property type="project" value="UniProtKB-SubCell"/>
</dbReference>
<dbReference type="GO" id="GO:0030425">
    <property type="term" value="C:dendrite"/>
    <property type="evidence" value="ECO:0000250"/>
    <property type="project" value="UniProtKB"/>
</dbReference>
<dbReference type="GO" id="GO:0043198">
    <property type="term" value="C:dendritic shaft"/>
    <property type="evidence" value="ECO:0000250"/>
    <property type="project" value="UniProtKB"/>
</dbReference>
<dbReference type="GO" id="GO:0043197">
    <property type="term" value="C:dendritic spine"/>
    <property type="evidence" value="ECO:0000250"/>
    <property type="project" value="UniProtKB"/>
</dbReference>
<dbReference type="GO" id="GO:0043025">
    <property type="term" value="C:neuronal cell body"/>
    <property type="evidence" value="ECO:0000250"/>
    <property type="project" value="UniProtKB"/>
</dbReference>
<dbReference type="GO" id="GO:0014069">
    <property type="term" value="C:postsynaptic density"/>
    <property type="evidence" value="ECO:0000250"/>
    <property type="project" value="UniProtKB"/>
</dbReference>
<dbReference type="GO" id="GO:0005681">
    <property type="term" value="C:spliceosomal complex"/>
    <property type="evidence" value="ECO:0007669"/>
    <property type="project" value="UniProtKB-KW"/>
</dbReference>
<dbReference type="GO" id="GO:0008017">
    <property type="term" value="F:microtubule binding"/>
    <property type="evidence" value="ECO:0000250"/>
    <property type="project" value="CAFA"/>
</dbReference>
<dbReference type="GO" id="GO:0030165">
    <property type="term" value="F:PDZ domain binding"/>
    <property type="evidence" value="ECO:0000250"/>
    <property type="project" value="UniProtKB"/>
</dbReference>
<dbReference type="GO" id="GO:0044877">
    <property type="term" value="F:protein-containing complex binding"/>
    <property type="evidence" value="ECO:0000250"/>
    <property type="project" value="UniProtKB"/>
</dbReference>
<dbReference type="GO" id="GO:0097110">
    <property type="term" value="F:scaffold protein binding"/>
    <property type="evidence" value="ECO:0007669"/>
    <property type="project" value="Ensembl"/>
</dbReference>
<dbReference type="GO" id="GO:0031122">
    <property type="term" value="P:cytoplasmic microtubule organization"/>
    <property type="evidence" value="ECO:0000250"/>
    <property type="project" value="UniProtKB"/>
</dbReference>
<dbReference type="GO" id="GO:0006397">
    <property type="term" value="P:mRNA processing"/>
    <property type="evidence" value="ECO:0007669"/>
    <property type="project" value="UniProtKB-KW"/>
</dbReference>
<dbReference type="GO" id="GO:0035372">
    <property type="term" value="P:protein localization to microtubule"/>
    <property type="evidence" value="ECO:0000250"/>
    <property type="project" value="UniProtKB"/>
</dbReference>
<dbReference type="GO" id="GO:1902897">
    <property type="term" value="P:regulation of postsynaptic density protein 95 clustering"/>
    <property type="evidence" value="ECO:0000250"/>
    <property type="project" value="CAFA"/>
</dbReference>
<dbReference type="GO" id="GO:0008380">
    <property type="term" value="P:RNA splicing"/>
    <property type="evidence" value="ECO:0007669"/>
    <property type="project" value="UniProtKB-KW"/>
</dbReference>
<dbReference type="InterPro" id="IPR019367">
    <property type="entry name" value="PDZ-binding_CRIPT"/>
</dbReference>
<dbReference type="PANTHER" id="PTHR11805">
    <property type="entry name" value="CYSTEINE-RICH PDZ-BINDING PROTEIN"/>
    <property type="match status" value="1"/>
</dbReference>
<dbReference type="PANTHER" id="PTHR11805:SF1">
    <property type="entry name" value="CYSTEINE-RICH PDZ-BINDING PROTEIN"/>
    <property type="match status" value="1"/>
</dbReference>
<dbReference type="Pfam" id="PF10235">
    <property type="entry name" value="Cript"/>
    <property type="match status" value="1"/>
</dbReference>